<sequence length="288" mass="32131">MDGFINLLKPPGMTSHDVVAYVRKKLKTGKVGHLGTLDPAAAGVLPVAVGQATRLIEYLENVAMKEYLAEIVFGITTATWDMEGEILEQKDASFLTAGDIEKVLGHFHGEIEQTPPLASAVKVSGKPLYRYQRQGEKVEPPKRKVFIDSIELLEFLADKPQPAVRLYIRCSRGTYIRSIANEIGNLLKTGATLKFLLRTRSGPFLLDDSNLLHEDFTLIPPEQLFQDFPKINLTREQYLRVKNGGGVKVETKGENFGPVFAYYGEKIIATGMICGQIFRPEKVFRFGE</sequence>
<comment type="function">
    <text evidence="1">Responsible for synthesis of pseudouridine from uracil-55 in the psi GC loop of transfer RNAs.</text>
</comment>
<comment type="catalytic activity">
    <reaction evidence="1">
        <text>uridine(55) in tRNA = pseudouridine(55) in tRNA</text>
        <dbReference type="Rhea" id="RHEA:42532"/>
        <dbReference type="Rhea" id="RHEA-COMP:10101"/>
        <dbReference type="Rhea" id="RHEA-COMP:10102"/>
        <dbReference type="ChEBI" id="CHEBI:65314"/>
        <dbReference type="ChEBI" id="CHEBI:65315"/>
        <dbReference type="EC" id="5.4.99.25"/>
    </reaction>
</comment>
<comment type="similarity">
    <text evidence="1">Belongs to the pseudouridine synthase TruB family. Type 1 subfamily.</text>
</comment>
<keyword id="KW-0413">Isomerase</keyword>
<keyword id="KW-1185">Reference proteome</keyword>
<keyword id="KW-0819">tRNA processing</keyword>
<feature type="chain" id="PRO_0000229347" description="tRNA pseudouridine synthase B">
    <location>
        <begin position="1"/>
        <end position="288"/>
    </location>
</feature>
<feature type="active site" description="Nucleophile" evidence="1">
    <location>
        <position position="38"/>
    </location>
</feature>
<gene>
    <name evidence="1" type="primary">truB</name>
    <name type="ordered locus">CHY_1763</name>
</gene>
<proteinExistence type="inferred from homology"/>
<organism>
    <name type="scientific">Carboxydothermus hydrogenoformans (strain ATCC BAA-161 / DSM 6008 / Z-2901)</name>
    <dbReference type="NCBI Taxonomy" id="246194"/>
    <lineage>
        <taxon>Bacteria</taxon>
        <taxon>Bacillati</taxon>
        <taxon>Bacillota</taxon>
        <taxon>Clostridia</taxon>
        <taxon>Thermoanaerobacterales</taxon>
        <taxon>Thermoanaerobacteraceae</taxon>
        <taxon>Carboxydothermus</taxon>
    </lineage>
</organism>
<dbReference type="EC" id="5.4.99.25" evidence="1"/>
<dbReference type="EMBL" id="CP000141">
    <property type="protein sequence ID" value="ABB16056.1"/>
    <property type="molecule type" value="Genomic_DNA"/>
</dbReference>
<dbReference type="RefSeq" id="WP_011344657.1">
    <property type="nucleotide sequence ID" value="NC_007503.1"/>
</dbReference>
<dbReference type="SMR" id="Q3ABA1"/>
<dbReference type="FunCoup" id="Q3ABA1">
    <property type="interactions" value="354"/>
</dbReference>
<dbReference type="STRING" id="246194.CHY_1763"/>
<dbReference type="KEGG" id="chy:CHY_1763"/>
<dbReference type="eggNOG" id="COG0130">
    <property type="taxonomic scope" value="Bacteria"/>
</dbReference>
<dbReference type="HOGENOM" id="CLU_032087_0_1_9"/>
<dbReference type="InParanoid" id="Q3ABA1"/>
<dbReference type="OrthoDB" id="9802309at2"/>
<dbReference type="Proteomes" id="UP000002706">
    <property type="component" value="Chromosome"/>
</dbReference>
<dbReference type="GO" id="GO:0003723">
    <property type="term" value="F:RNA binding"/>
    <property type="evidence" value="ECO:0007669"/>
    <property type="project" value="InterPro"/>
</dbReference>
<dbReference type="GO" id="GO:0160148">
    <property type="term" value="F:tRNA pseudouridine(55) synthase activity"/>
    <property type="evidence" value="ECO:0007669"/>
    <property type="project" value="UniProtKB-EC"/>
</dbReference>
<dbReference type="GO" id="GO:1990481">
    <property type="term" value="P:mRNA pseudouridine synthesis"/>
    <property type="evidence" value="ECO:0007669"/>
    <property type="project" value="TreeGrafter"/>
</dbReference>
<dbReference type="GO" id="GO:0031119">
    <property type="term" value="P:tRNA pseudouridine synthesis"/>
    <property type="evidence" value="ECO:0007669"/>
    <property type="project" value="UniProtKB-UniRule"/>
</dbReference>
<dbReference type="CDD" id="cd02573">
    <property type="entry name" value="PseudoU_synth_EcTruB"/>
    <property type="match status" value="1"/>
</dbReference>
<dbReference type="Gene3D" id="3.30.2350.10">
    <property type="entry name" value="Pseudouridine synthase"/>
    <property type="match status" value="1"/>
</dbReference>
<dbReference type="HAMAP" id="MF_01080">
    <property type="entry name" value="TruB_bact"/>
    <property type="match status" value="1"/>
</dbReference>
<dbReference type="InterPro" id="IPR020103">
    <property type="entry name" value="PsdUridine_synth_cat_dom_sf"/>
</dbReference>
<dbReference type="InterPro" id="IPR002501">
    <property type="entry name" value="PsdUridine_synth_N"/>
</dbReference>
<dbReference type="InterPro" id="IPR014780">
    <property type="entry name" value="tRNA_psdUridine_synth_TruB"/>
</dbReference>
<dbReference type="NCBIfam" id="TIGR00431">
    <property type="entry name" value="TruB"/>
    <property type="match status" value="1"/>
</dbReference>
<dbReference type="PANTHER" id="PTHR13767:SF2">
    <property type="entry name" value="PSEUDOURIDYLATE SYNTHASE TRUB1"/>
    <property type="match status" value="1"/>
</dbReference>
<dbReference type="PANTHER" id="PTHR13767">
    <property type="entry name" value="TRNA-PSEUDOURIDINE SYNTHASE"/>
    <property type="match status" value="1"/>
</dbReference>
<dbReference type="Pfam" id="PF01509">
    <property type="entry name" value="TruB_N"/>
    <property type="match status" value="1"/>
</dbReference>
<dbReference type="SUPFAM" id="SSF55120">
    <property type="entry name" value="Pseudouridine synthase"/>
    <property type="match status" value="1"/>
</dbReference>
<protein>
    <recommendedName>
        <fullName evidence="1">tRNA pseudouridine synthase B</fullName>
        <ecNumber evidence="1">5.4.99.25</ecNumber>
    </recommendedName>
    <alternativeName>
        <fullName evidence="1">tRNA pseudouridine(55) synthase</fullName>
        <shortName evidence="1">Psi55 synthase</shortName>
    </alternativeName>
    <alternativeName>
        <fullName evidence="1">tRNA pseudouridylate synthase</fullName>
    </alternativeName>
    <alternativeName>
        <fullName evidence="1">tRNA-uridine isomerase</fullName>
    </alternativeName>
</protein>
<evidence type="ECO:0000255" key="1">
    <source>
        <dbReference type="HAMAP-Rule" id="MF_01080"/>
    </source>
</evidence>
<accession>Q3ABA1</accession>
<reference key="1">
    <citation type="journal article" date="2005" name="PLoS Genet.">
        <title>Life in hot carbon monoxide: the complete genome sequence of Carboxydothermus hydrogenoformans Z-2901.</title>
        <authorList>
            <person name="Wu M."/>
            <person name="Ren Q."/>
            <person name="Durkin A.S."/>
            <person name="Daugherty S.C."/>
            <person name="Brinkac L.M."/>
            <person name="Dodson R.J."/>
            <person name="Madupu R."/>
            <person name="Sullivan S.A."/>
            <person name="Kolonay J.F."/>
            <person name="Nelson W.C."/>
            <person name="Tallon L.J."/>
            <person name="Jones K.M."/>
            <person name="Ulrich L.E."/>
            <person name="Gonzalez J.M."/>
            <person name="Zhulin I.B."/>
            <person name="Robb F.T."/>
            <person name="Eisen J.A."/>
        </authorList>
    </citation>
    <scope>NUCLEOTIDE SEQUENCE [LARGE SCALE GENOMIC DNA]</scope>
    <source>
        <strain>ATCC BAA-161 / DSM 6008 / Z-2901</strain>
    </source>
</reference>
<name>TRUB_CARHZ</name>